<organism>
    <name type="scientific">Cupriavidus necator (strain ATCC 17699 / DSM 428 / KCTC 22496 / NCIMB 10442 / H16 / Stanier 337)</name>
    <name type="common">Ralstonia eutropha</name>
    <dbReference type="NCBI Taxonomy" id="381666"/>
    <lineage>
        <taxon>Bacteria</taxon>
        <taxon>Pseudomonadati</taxon>
        <taxon>Pseudomonadota</taxon>
        <taxon>Betaproteobacteria</taxon>
        <taxon>Burkholderiales</taxon>
        <taxon>Burkholderiaceae</taxon>
        <taxon>Cupriavidus</taxon>
    </lineage>
</organism>
<reference key="1">
    <citation type="journal article" date="1989" name="Gene">
        <title>Sequence analysis of the chromosomal and plasmid genes encoding phosphoribulokinase from Alcaligenes eutrophus.</title>
        <authorList>
            <person name="Kossmann J."/>
            <person name="Klintworth R."/>
            <person name="Bowien B."/>
        </authorList>
    </citation>
    <scope>NUCLEOTIDE SEQUENCE [GENOMIC DNA]</scope>
</reference>
<reference key="2">
    <citation type="journal article" date="2006" name="Nat. Biotechnol.">
        <title>Genome sequence of the bioplastic-producing 'Knallgas' bacterium Ralstonia eutropha H16.</title>
        <authorList>
            <person name="Pohlmann A."/>
            <person name="Fricke W.F."/>
            <person name="Reinecke F."/>
            <person name="Kusian B."/>
            <person name="Liesegang H."/>
            <person name="Cramm R."/>
            <person name="Eitinger T."/>
            <person name="Ewering C."/>
            <person name="Poetter M."/>
            <person name="Schwartz E."/>
            <person name="Strittmatter A."/>
            <person name="Voss I."/>
            <person name="Gottschalk G."/>
            <person name="Steinbuechel A."/>
            <person name="Friedrich B."/>
            <person name="Bowien B."/>
        </authorList>
    </citation>
    <scope>NUCLEOTIDE SEQUENCE [LARGE SCALE GENOMIC DNA]</scope>
    <source>
        <strain>ATCC 17699 / DSM 428 / KCTC 22496 / NCIMB 10442 / H16 / Stanier 337</strain>
    </source>
</reference>
<reference key="3">
    <citation type="journal article" date="1985" name="J. Bacteriol.">
        <title>Chromosomal and plasmid locations for phosphoribulokinase genes in Alcaligenes eutrophus.</title>
        <authorList>
            <person name="Klintworth R."/>
            <person name="Husemann M."/>
            <person name="Salnikow J."/>
            <person name="Bowien B."/>
        </authorList>
    </citation>
    <scope>PROTEIN SEQUENCE OF 2-18</scope>
</reference>
<proteinExistence type="evidence at protein level"/>
<keyword id="KW-0067">ATP-binding</keyword>
<keyword id="KW-0113">Calvin cycle</keyword>
<keyword id="KW-0903">Direct protein sequencing</keyword>
<keyword id="KW-0418">Kinase</keyword>
<keyword id="KW-0547">Nucleotide-binding</keyword>
<keyword id="KW-1185">Reference proteome</keyword>
<keyword id="KW-0808">Transferase</keyword>
<evidence type="ECO:0000250" key="1"/>
<evidence type="ECO:0000269" key="2">
    <source>
    </source>
</evidence>
<evidence type="ECO:0000305" key="3"/>
<feature type="initiator methionine" description="Removed" evidence="2">
    <location>
        <position position="1"/>
    </location>
</feature>
<feature type="chain" id="PRO_0000201951" description="Phosphoribulokinase, chromosomal">
    <location>
        <begin position="2"/>
        <end position="292"/>
    </location>
</feature>
<feature type="binding site" evidence="1">
    <location>
        <begin position="12"/>
        <end position="20"/>
    </location>
    <ligand>
        <name>ATP</name>
        <dbReference type="ChEBI" id="CHEBI:30616"/>
    </ligand>
</feature>
<protein>
    <recommendedName>
        <fullName>Phosphoribulokinase, chromosomal</fullName>
        <shortName>PRK</shortName>
        <shortName>PRKase</shortName>
        <ecNumber>2.7.1.19</ecNumber>
    </recommendedName>
    <alternativeName>
        <fullName>Phosphopentokinase</fullName>
    </alternativeName>
</protein>
<name>KPPR2_CUPNH</name>
<comment type="catalytic activity">
    <reaction>
        <text>D-ribulose 5-phosphate + ATP = D-ribulose 1,5-bisphosphate + ADP + H(+)</text>
        <dbReference type="Rhea" id="RHEA:19365"/>
        <dbReference type="ChEBI" id="CHEBI:15378"/>
        <dbReference type="ChEBI" id="CHEBI:30616"/>
        <dbReference type="ChEBI" id="CHEBI:57870"/>
        <dbReference type="ChEBI" id="CHEBI:58121"/>
        <dbReference type="ChEBI" id="CHEBI:456216"/>
        <dbReference type="EC" id="2.7.1.19"/>
    </reaction>
</comment>
<comment type="pathway">
    <text>Carbohydrate biosynthesis; Calvin cycle.</text>
</comment>
<comment type="subunit">
    <text>Homooctamer.</text>
</comment>
<comment type="similarity">
    <text evidence="3">Belongs to the phosphoribulokinase family.</text>
</comment>
<gene>
    <name type="primary">cfxP</name>
    <name type="ordered locus">H16_B1389</name>
</gene>
<accession>P19923</accession>
<accession>Q0K1E6</accession>
<sequence length="292" mass="33316">MSERYPIIAITGSSGAGTTSVTRTFENIFRREGVKSVVIEGDSFHRYDRAEMKVKMAEAERTGNMNFSHFGEENNLFGELENLFRSYAETGTGMHRHYLHSPEEAAPFGQEPGTFTQWEPLPADTDLLFYEGLHGGVVTDSVNVAQYPNLLIGVVPVINLEWIQKLWRDKKQRGYSTEAVTDTILRRMPDYVNYICPQFSRTHVNFQRVPCVDTSNPFISREIPAPDESMVVIRFANPKGIDFQYLLSMIHDSFMSRANTIVVPGGKMELAMQLIFTPFVLRMMERRKRAAQ</sequence>
<dbReference type="EC" id="2.7.1.19"/>
<dbReference type="EMBL" id="M33563">
    <property type="protein sequence ID" value="AAA21959.1"/>
    <property type="molecule type" value="Genomic_DNA"/>
</dbReference>
<dbReference type="EMBL" id="AM260480">
    <property type="protein sequence ID" value="CAJ96178.1"/>
    <property type="molecule type" value="Genomic_DNA"/>
</dbReference>
<dbReference type="PIR" id="JQ0399">
    <property type="entry name" value="JQ0399"/>
</dbReference>
<dbReference type="RefSeq" id="WP_010809295.1">
    <property type="nucleotide sequence ID" value="NZ_CP039288.1"/>
</dbReference>
<dbReference type="SMR" id="P19923"/>
<dbReference type="STRING" id="381666.H16_B1389"/>
<dbReference type="KEGG" id="reh:H16_B1389"/>
<dbReference type="eggNOG" id="COG3954">
    <property type="taxonomic scope" value="Bacteria"/>
</dbReference>
<dbReference type="HOGENOM" id="CLU_962223_0_0_4"/>
<dbReference type="OrthoDB" id="9773443at2"/>
<dbReference type="UniPathway" id="UPA00116"/>
<dbReference type="Proteomes" id="UP000008210">
    <property type="component" value="Chromosome 2"/>
</dbReference>
<dbReference type="GO" id="GO:0005524">
    <property type="term" value="F:ATP binding"/>
    <property type="evidence" value="ECO:0007669"/>
    <property type="project" value="UniProtKB-KW"/>
</dbReference>
<dbReference type="GO" id="GO:0008974">
    <property type="term" value="F:phosphoribulokinase activity"/>
    <property type="evidence" value="ECO:0007669"/>
    <property type="project" value="UniProtKB-EC"/>
</dbReference>
<dbReference type="GO" id="GO:0019253">
    <property type="term" value="P:reductive pentose-phosphate cycle"/>
    <property type="evidence" value="ECO:0007669"/>
    <property type="project" value="UniProtKB-UniPathway"/>
</dbReference>
<dbReference type="Gene3D" id="3.40.50.300">
    <property type="entry name" value="P-loop containing nucleotide triphosphate hydrolases"/>
    <property type="match status" value="1"/>
</dbReference>
<dbReference type="InterPro" id="IPR027417">
    <property type="entry name" value="P-loop_NTPase"/>
</dbReference>
<dbReference type="InterPro" id="IPR006082">
    <property type="entry name" value="PRK"/>
</dbReference>
<dbReference type="InterPro" id="IPR006083">
    <property type="entry name" value="PRK/URK"/>
</dbReference>
<dbReference type="NCBIfam" id="NF011997">
    <property type="entry name" value="PRK15453.1"/>
    <property type="match status" value="1"/>
</dbReference>
<dbReference type="Pfam" id="PF00485">
    <property type="entry name" value="PRK"/>
    <property type="match status" value="1"/>
</dbReference>
<dbReference type="PRINTS" id="PR00478">
    <property type="entry name" value="PHRIBLKINASE"/>
</dbReference>
<dbReference type="SUPFAM" id="SSF52540">
    <property type="entry name" value="P-loop containing nucleoside triphosphate hydrolases"/>
    <property type="match status" value="1"/>
</dbReference>
<dbReference type="PROSITE" id="PS00567">
    <property type="entry name" value="PHOSPHORIBULOKINASE"/>
    <property type="match status" value="1"/>
</dbReference>